<name>ATPA_LYSSC</name>
<organism>
    <name type="scientific">Lysinibacillus sphaericus (strain C3-41)</name>
    <dbReference type="NCBI Taxonomy" id="444177"/>
    <lineage>
        <taxon>Bacteria</taxon>
        <taxon>Bacillati</taxon>
        <taxon>Bacillota</taxon>
        <taxon>Bacilli</taxon>
        <taxon>Bacillales</taxon>
        <taxon>Bacillaceae</taxon>
        <taxon>Lysinibacillus</taxon>
    </lineage>
</organism>
<sequence>MGIKAEEISSLIKQQIENYESELKVSEVGTVIRIGDGIALAHGLDNAMAGELLEFSNGVMGMAQNLEEGNVGIVILGPYTDIKEGDEVRRTGRIMEVPVGEELIGRVVNPLGQPVDGQGPINTTKSRPIESPAFGVMARKSVHEPLQTGIKAIDALVPIGRGQRELIIGDRQVGKTSVAIDTILNQDGENMICIYVAIGQKESTVRGVVETLRKHGALDYTIVVTAAASQPAPLLFLAPFAGVSMAEEFMLQGKHVLIVYDDLSKQASAYRELSLLLRRPPGREAYPGDVFYLHSRLLERAAKLNETYQNGSITALPFVETQAGDISAYIPTNVISITDGQIFLQSDLFNSGVRPAINAGLSVSRVGGSAQIKAMKKVAGTLRLDLAAFRELESFAQFGSDLDKITLAKLERGKRTVEVLKQDLNKPLKVEKQVAILYALTKGHLDDIPVQDIVRFESEFLSWLDSNHTNVLDHVRTTKELAPDADYVAALTEFKKTFAKSE</sequence>
<evidence type="ECO:0000255" key="1">
    <source>
        <dbReference type="HAMAP-Rule" id="MF_01346"/>
    </source>
</evidence>
<dbReference type="EC" id="7.1.2.2" evidence="1"/>
<dbReference type="EMBL" id="CP000817">
    <property type="protein sequence ID" value="ACA38626.1"/>
    <property type="molecule type" value="Genomic_DNA"/>
</dbReference>
<dbReference type="RefSeq" id="WP_012292766.1">
    <property type="nucleotide sequence ID" value="NC_010382.1"/>
</dbReference>
<dbReference type="SMR" id="B1HM54"/>
<dbReference type="EnsemblBacteria" id="ACA38626">
    <property type="protein sequence ID" value="ACA38626"/>
    <property type="gene ID" value="Bsph_1014"/>
</dbReference>
<dbReference type="KEGG" id="lsp:Bsph_1014"/>
<dbReference type="HOGENOM" id="CLU_010091_2_1_9"/>
<dbReference type="Proteomes" id="UP000002164">
    <property type="component" value="Chromosome"/>
</dbReference>
<dbReference type="GO" id="GO:0005886">
    <property type="term" value="C:plasma membrane"/>
    <property type="evidence" value="ECO:0007669"/>
    <property type="project" value="UniProtKB-SubCell"/>
</dbReference>
<dbReference type="GO" id="GO:0045259">
    <property type="term" value="C:proton-transporting ATP synthase complex"/>
    <property type="evidence" value="ECO:0007669"/>
    <property type="project" value="UniProtKB-KW"/>
</dbReference>
<dbReference type="GO" id="GO:0043531">
    <property type="term" value="F:ADP binding"/>
    <property type="evidence" value="ECO:0007669"/>
    <property type="project" value="TreeGrafter"/>
</dbReference>
<dbReference type="GO" id="GO:0005524">
    <property type="term" value="F:ATP binding"/>
    <property type="evidence" value="ECO:0007669"/>
    <property type="project" value="UniProtKB-UniRule"/>
</dbReference>
<dbReference type="GO" id="GO:0046933">
    <property type="term" value="F:proton-transporting ATP synthase activity, rotational mechanism"/>
    <property type="evidence" value="ECO:0007669"/>
    <property type="project" value="UniProtKB-UniRule"/>
</dbReference>
<dbReference type="CDD" id="cd18113">
    <property type="entry name" value="ATP-synt_F1_alpha_C"/>
    <property type="match status" value="1"/>
</dbReference>
<dbReference type="CDD" id="cd18116">
    <property type="entry name" value="ATP-synt_F1_alpha_N"/>
    <property type="match status" value="1"/>
</dbReference>
<dbReference type="CDD" id="cd01132">
    <property type="entry name" value="F1-ATPase_alpha_CD"/>
    <property type="match status" value="1"/>
</dbReference>
<dbReference type="FunFam" id="1.20.150.20:FF:000001">
    <property type="entry name" value="ATP synthase subunit alpha"/>
    <property type="match status" value="1"/>
</dbReference>
<dbReference type="FunFam" id="2.40.30.20:FF:000001">
    <property type="entry name" value="ATP synthase subunit alpha"/>
    <property type="match status" value="1"/>
</dbReference>
<dbReference type="FunFam" id="3.40.50.300:FF:000002">
    <property type="entry name" value="ATP synthase subunit alpha"/>
    <property type="match status" value="1"/>
</dbReference>
<dbReference type="Gene3D" id="2.40.30.20">
    <property type="match status" value="1"/>
</dbReference>
<dbReference type="Gene3D" id="1.20.150.20">
    <property type="entry name" value="ATP synthase alpha/beta chain, C-terminal domain"/>
    <property type="match status" value="1"/>
</dbReference>
<dbReference type="Gene3D" id="3.40.50.300">
    <property type="entry name" value="P-loop containing nucleotide triphosphate hydrolases"/>
    <property type="match status" value="1"/>
</dbReference>
<dbReference type="HAMAP" id="MF_01346">
    <property type="entry name" value="ATP_synth_alpha_bact"/>
    <property type="match status" value="1"/>
</dbReference>
<dbReference type="InterPro" id="IPR023366">
    <property type="entry name" value="ATP_synth_asu-like_sf"/>
</dbReference>
<dbReference type="InterPro" id="IPR000793">
    <property type="entry name" value="ATP_synth_asu_C"/>
</dbReference>
<dbReference type="InterPro" id="IPR038376">
    <property type="entry name" value="ATP_synth_asu_C_sf"/>
</dbReference>
<dbReference type="InterPro" id="IPR033732">
    <property type="entry name" value="ATP_synth_F1_a_nt-bd_dom"/>
</dbReference>
<dbReference type="InterPro" id="IPR005294">
    <property type="entry name" value="ATP_synth_F1_asu"/>
</dbReference>
<dbReference type="InterPro" id="IPR020003">
    <property type="entry name" value="ATPase_a/bsu_AS"/>
</dbReference>
<dbReference type="InterPro" id="IPR004100">
    <property type="entry name" value="ATPase_F1/V1/A1_a/bsu_N"/>
</dbReference>
<dbReference type="InterPro" id="IPR036121">
    <property type="entry name" value="ATPase_F1/V1/A1_a/bsu_N_sf"/>
</dbReference>
<dbReference type="InterPro" id="IPR000194">
    <property type="entry name" value="ATPase_F1/V1/A1_a/bsu_nucl-bd"/>
</dbReference>
<dbReference type="InterPro" id="IPR027417">
    <property type="entry name" value="P-loop_NTPase"/>
</dbReference>
<dbReference type="NCBIfam" id="TIGR00962">
    <property type="entry name" value="atpA"/>
    <property type="match status" value="1"/>
</dbReference>
<dbReference type="NCBIfam" id="NF009884">
    <property type="entry name" value="PRK13343.1"/>
    <property type="match status" value="1"/>
</dbReference>
<dbReference type="PANTHER" id="PTHR48082">
    <property type="entry name" value="ATP SYNTHASE SUBUNIT ALPHA, MITOCHONDRIAL"/>
    <property type="match status" value="1"/>
</dbReference>
<dbReference type="PANTHER" id="PTHR48082:SF2">
    <property type="entry name" value="ATP SYNTHASE SUBUNIT ALPHA, MITOCHONDRIAL"/>
    <property type="match status" value="1"/>
</dbReference>
<dbReference type="Pfam" id="PF00006">
    <property type="entry name" value="ATP-synt_ab"/>
    <property type="match status" value="1"/>
</dbReference>
<dbReference type="Pfam" id="PF00306">
    <property type="entry name" value="ATP-synt_ab_C"/>
    <property type="match status" value="1"/>
</dbReference>
<dbReference type="Pfam" id="PF02874">
    <property type="entry name" value="ATP-synt_ab_N"/>
    <property type="match status" value="1"/>
</dbReference>
<dbReference type="PIRSF" id="PIRSF039088">
    <property type="entry name" value="F_ATPase_subunit_alpha"/>
    <property type="match status" value="1"/>
</dbReference>
<dbReference type="SUPFAM" id="SSF47917">
    <property type="entry name" value="C-terminal domain of alpha and beta subunits of F1 ATP synthase"/>
    <property type="match status" value="1"/>
</dbReference>
<dbReference type="SUPFAM" id="SSF50615">
    <property type="entry name" value="N-terminal domain of alpha and beta subunits of F1 ATP synthase"/>
    <property type="match status" value="1"/>
</dbReference>
<dbReference type="SUPFAM" id="SSF52540">
    <property type="entry name" value="P-loop containing nucleoside triphosphate hydrolases"/>
    <property type="match status" value="1"/>
</dbReference>
<dbReference type="PROSITE" id="PS00152">
    <property type="entry name" value="ATPASE_ALPHA_BETA"/>
    <property type="match status" value="1"/>
</dbReference>
<gene>
    <name evidence="1" type="primary">atpA</name>
    <name type="ordered locus">Bsph_1014</name>
</gene>
<feature type="chain" id="PRO_1000143404" description="ATP synthase subunit alpha">
    <location>
        <begin position="1"/>
        <end position="502"/>
    </location>
</feature>
<feature type="binding site" evidence="1">
    <location>
        <begin position="169"/>
        <end position="176"/>
    </location>
    <ligand>
        <name>ATP</name>
        <dbReference type="ChEBI" id="CHEBI:30616"/>
    </ligand>
</feature>
<feature type="site" description="Required for activity" evidence="1">
    <location>
        <position position="362"/>
    </location>
</feature>
<comment type="function">
    <text evidence="1">Produces ATP from ADP in the presence of a proton gradient across the membrane. The alpha chain is a regulatory subunit.</text>
</comment>
<comment type="catalytic activity">
    <reaction evidence="1">
        <text>ATP + H2O + 4 H(+)(in) = ADP + phosphate + 5 H(+)(out)</text>
        <dbReference type="Rhea" id="RHEA:57720"/>
        <dbReference type="ChEBI" id="CHEBI:15377"/>
        <dbReference type="ChEBI" id="CHEBI:15378"/>
        <dbReference type="ChEBI" id="CHEBI:30616"/>
        <dbReference type="ChEBI" id="CHEBI:43474"/>
        <dbReference type="ChEBI" id="CHEBI:456216"/>
        <dbReference type="EC" id="7.1.2.2"/>
    </reaction>
</comment>
<comment type="subunit">
    <text evidence="1">F-type ATPases have 2 components, CF(1) - the catalytic core - and CF(0) - the membrane proton channel. CF(1) has five subunits: alpha(3), beta(3), gamma(1), delta(1), epsilon(1). CF(0) has three main subunits: a(1), b(2) and c(9-12). The alpha and beta chains form an alternating ring which encloses part of the gamma chain. CF(1) is attached to CF(0) by a central stalk formed by the gamma and epsilon chains, while a peripheral stalk is formed by the delta and b chains.</text>
</comment>
<comment type="subcellular location">
    <subcellularLocation>
        <location evidence="1">Cell membrane</location>
        <topology evidence="1">Peripheral membrane protein</topology>
    </subcellularLocation>
</comment>
<comment type="similarity">
    <text evidence="1">Belongs to the ATPase alpha/beta chains family.</text>
</comment>
<keyword id="KW-0066">ATP synthesis</keyword>
<keyword id="KW-0067">ATP-binding</keyword>
<keyword id="KW-1003">Cell membrane</keyword>
<keyword id="KW-0139">CF(1)</keyword>
<keyword id="KW-0375">Hydrogen ion transport</keyword>
<keyword id="KW-0406">Ion transport</keyword>
<keyword id="KW-0472">Membrane</keyword>
<keyword id="KW-0547">Nucleotide-binding</keyword>
<keyword id="KW-1278">Translocase</keyword>
<keyword id="KW-0813">Transport</keyword>
<protein>
    <recommendedName>
        <fullName evidence="1">ATP synthase subunit alpha</fullName>
        <ecNumber evidence="1">7.1.2.2</ecNumber>
    </recommendedName>
    <alternativeName>
        <fullName evidence="1">ATP synthase F1 sector subunit alpha</fullName>
    </alternativeName>
    <alternativeName>
        <fullName evidence="1">F-ATPase subunit alpha</fullName>
    </alternativeName>
</protein>
<accession>B1HM54</accession>
<reference key="1">
    <citation type="journal article" date="2008" name="J. Bacteriol.">
        <title>Complete genome sequence of the mosquitocidal bacterium Bacillus sphaericus C3-41 and comparison with those of closely related Bacillus species.</title>
        <authorList>
            <person name="Hu X."/>
            <person name="Fan W."/>
            <person name="Han B."/>
            <person name="Liu H."/>
            <person name="Zheng D."/>
            <person name="Li Q."/>
            <person name="Dong W."/>
            <person name="Yan J."/>
            <person name="Gao M."/>
            <person name="Berry C."/>
            <person name="Yuan Z."/>
        </authorList>
    </citation>
    <scope>NUCLEOTIDE SEQUENCE [LARGE SCALE GENOMIC DNA]</scope>
    <source>
        <strain>C3-41</strain>
    </source>
</reference>
<proteinExistence type="inferred from homology"/>